<organism>
    <name type="scientific">Heteropoda venatoria</name>
    <name type="common">Brown huntsman spider</name>
    <name type="synonym">Aranea venatoria</name>
    <dbReference type="NCBI Taxonomy" id="152925"/>
    <lineage>
        <taxon>Eukaryota</taxon>
        <taxon>Metazoa</taxon>
        <taxon>Ecdysozoa</taxon>
        <taxon>Arthropoda</taxon>
        <taxon>Chelicerata</taxon>
        <taxon>Arachnida</taxon>
        <taxon>Araneae</taxon>
        <taxon>Araneomorphae</taxon>
        <taxon>Entelegynae</taxon>
        <taxon>Dionycha</taxon>
        <taxon>Sparassidae</taxon>
        <taxon>Heteropoda</taxon>
    </lineage>
</organism>
<keyword id="KW-0027">Amidation</keyword>
<keyword id="KW-0903">Direct protein sequencing</keyword>
<keyword id="KW-1015">Disulfide bond</keyword>
<keyword id="KW-0872">Ion channel impairing toxin</keyword>
<keyword id="KW-0528">Neurotoxin</keyword>
<keyword id="KW-0964">Secreted</keyword>
<keyword id="KW-0732">Signal</keyword>
<keyword id="KW-0800">Toxin</keyword>
<keyword id="KW-0738">Voltage-gated sodium channel impairing toxin</keyword>
<comment type="function">
    <text evidence="3">Insecticidal toxin that potently and irreversibly blocks voltage-gated sodium channels (Nav) in cockroach dorsal unpaired median (DUM) neurons (IC(50)=833.7 nM) (PubMed:29880771). It does not change both the steady-state activation and inactivation curves, suggesting it acts as a pore blocker (possibly at Nav site 1) (PubMed:29880771). Does not show toxicity when intraperitoneally injected into mouse (PubMed:29880771).</text>
</comment>
<comment type="subcellular location">
    <subcellularLocation>
        <location evidence="3">Secreted</location>
    </subcellularLocation>
</comment>
<comment type="tissue specificity">
    <text evidence="6">Expressed by the venom gland.</text>
</comment>
<comment type="domain">
    <text evidence="1">The presence of a 'disulfide through disulfide knot' structurally defines this protein as a knottin.</text>
</comment>
<comment type="mass spectrometry" mass="4169.51" method="MALDI" evidence="3"/>
<comment type="toxic dose">
    <text evidence="3">LD(50) is 2.8 nmol/g of body weight, when intraperitoneally injected into cockroaches.</text>
</comment>
<comment type="miscellaneous">
    <text evidence="3">Hardly affects the DUM voltage-gated potassium channels (Kv) (15.4% inhibition at 10 uM) and the DUM high-voltage-activated calcium channels (HVA Cav) (PubMed:29880771). Does not affect or only very weakly voltage-gated sodium channels Nav1.3/SNC3A (&lt;10% at 15 uM), Nav1.4//SNC4A (&lt;10% at 15 uM), Nav1.5/SNC5A (no inhibition at 15 uM), Nav1.7/SNC9A (no inhibition at 15 uM), and Nav1.8/SNC10A (no inhibition at 15 uM), HVA Cav, and Kv in rat dorsal root ganglion (DRG) neurons (PubMed:29880771).</text>
</comment>
<comment type="similarity">
    <text evidence="5">Belongs to the neurotoxin 10 (Hwtx-1) family.</text>
</comment>
<proteinExistence type="evidence at protein level"/>
<reference evidence="7" key="1">
    <citation type="submission" date="2012-11" db="EMBL/GenBank/DDBJ databases">
        <authorList>
            <person name="Chen J."/>
            <person name="Li Q."/>
            <person name="He Y."/>
            <person name="Liang H."/>
        </authorList>
    </citation>
    <scope>NUCLEOTIDE SEQUENCE [MRNA]</scope>
</reference>
<reference key="2">
    <citation type="journal article" date="2018" name="Toxins">
        <title>Purification and characterization of a novel insecticidal toxin, mu-sparatoxin-Hv2, from the venom of the spider Heteropoda venatoria.</title>
        <authorList>
            <person name="Xiao Z."/>
            <person name="Zhang Y."/>
            <person name="Zeng J."/>
            <person name="Liang S."/>
            <person name="Tang C."/>
            <person name="Liu Z."/>
        </authorList>
    </citation>
    <scope>PROTEIN SEQUENCE OF 36-44</scope>
    <scope>FUNCTION</scope>
    <scope>SUBCELLULAR LOCATION</scope>
    <scope>MASS SPECTROMETRY</scope>
    <scope>SYNTHESIS OF 36-44</scope>
    <scope>AMIDATION AT PHE-72</scope>
</reference>
<name>TXHV2_HETVE</name>
<evidence type="ECO:0000250" key="1">
    <source>
        <dbReference type="UniProtKB" id="P60590"/>
    </source>
</evidence>
<evidence type="ECO:0000255" key="2"/>
<evidence type="ECO:0000269" key="3">
    <source>
    </source>
</evidence>
<evidence type="ECO:0000303" key="4">
    <source>
    </source>
</evidence>
<evidence type="ECO:0000305" key="5"/>
<evidence type="ECO:0000305" key="6">
    <source>
    </source>
</evidence>
<evidence type="ECO:0000312" key="7">
    <source>
        <dbReference type="EMBL" id="AHF45777.1"/>
    </source>
</evidence>
<feature type="signal peptide" evidence="2">
    <location>
        <begin position="1"/>
        <end position="20"/>
    </location>
</feature>
<feature type="propeptide" id="PRO_0000451473" evidence="6">
    <location>
        <begin position="21"/>
        <end position="35"/>
    </location>
</feature>
<feature type="chain" id="PRO_5001836283" description="Mu-sparatoxin-Hv2" evidence="6">
    <location>
        <begin position="36"/>
        <end position="72"/>
    </location>
</feature>
<feature type="modified residue" description="Phenylalanine amide" evidence="6">
    <location>
        <position position="72"/>
    </location>
</feature>
<feature type="disulfide bond" evidence="1">
    <location>
        <begin position="39"/>
        <end position="53"/>
    </location>
</feature>
<feature type="disulfide bond" evidence="1">
    <location>
        <begin position="46"/>
        <end position="58"/>
    </location>
</feature>
<feature type="disulfide bond" evidence="1">
    <location>
        <begin position="52"/>
        <end position="68"/>
    </location>
</feature>
<dbReference type="EMBL" id="KC145628">
    <property type="protein sequence ID" value="AHF45777.1"/>
    <property type="molecule type" value="mRNA"/>
</dbReference>
<dbReference type="SMR" id="A0A088BP94"/>
<dbReference type="GO" id="GO:0005576">
    <property type="term" value="C:extracellular region"/>
    <property type="evidence" value="ECO:0007669"/>
    <property type="project" value="UniProtKB-SubCell"/>
</dbReference>
<dbReference type="GO" id="GO:0008200">
    <property type="term" value="F:ion channel inhibitor activity"/>
    <property type="evidence" value="ECO:0007669"/>
    <property type="project" value="InterPro"/>
</dbReference>
<dbReference type="GO" id="GO:0017080">
    <property type="term" value="F:sodium channel regulator activity"/>
    <property type="evidence" value="ECO:0007669"/>
    <property type="project" value="UniProtKB-KW"/>
</dbReference>
<dbReference type="GO" id="GO:0090729">
    <property type="term" value="F:toxin activity"/>
    <property type="evidence" value="ECO:0007669"/>
    <property type="project" value="UniProtKB-KW"/>
</dbReference>
<dbReference type="InterPro" id="IPR011696">
    <property type="entry name" value="Huwentoxin-1"/>
</dbReference>
<dbReference type="Pfam" id="PF07740">
    <property type="entry name" value="Toxin_12"/>
    <property type="match status" value="1"/>
</dbReference>
<protein>
    <recommendedName>
        <fullName evidence="4">Mu-sparatoxin-Hv2</fullName>
        <shortName evidence="4">Mu-SPRTX-Hv2</shortName>
    </recommendedName>
    <alternativeName>
        <fullName evidence="7">U15-sparatoxin-Hv1a</fullName>
    </alternativeName>
</protein>
<sequence length="73" mass="8006">MKFAIVITLLLVAFSAVALADKSIERAVMDLITARDDDCGKLFADCTSDSDCCENWVCSKTGFVKNICKYNFG</sequence>
<accession>A0A088BP94</accession>